<name>WHIA_STRMU</name>
<reference key="1">
    <citation type="journal article" date="2002" name="Proc. Natl. Acad. Sci. U.S.A.">
        <title>Genome sequence of Streptococcus mutans UA159, a cariogenic dental pathogen.</title>
        <authorList>
            <person name="Ajdic D.J."/>
            <person name="McShan W.M."/>
            <person name="McLaughlin R.E."/>
            <person name="Savic G."/>
            <person name="Chang J."/>
            <person name="Carson M.B."/>
            <person name="Primeaux C."/>
            <person name="Tian R."/>
            <person name="Kenton S."/>
            <person name="Jia H.G."/>
            <person name="Lin S.P."/>
            <person name="Qian Y."/>
            <person name="Li S."/>
            <person name="Zhu H."/>
            <person name="Najar F.Z."/>
            <person name="Lai H."/>
            <person name="White J."/>
            <person name="Roe B.A."/>
            <person name="Ferretti J.J."/>
        </authorList>
    </citation>
    <scope>NUCLEOTIDE SEQUENCE [LARGE SCALE GENOMIC DNA]</scope>
    <source>
        <strain>ATCC 700610 / UA159</strain>
    </source>
</reference>
<keyword id="KW-0131">Cell cycle</keyword>
<keyword id="KW-0132">Cell division</keyword>
<keyword id="KW-0238">DNA-binding</keyword>
<keyword id="KW-1185">Reference proteome</keyword>
<sequence length="303" mass="34191">MSFTTQVKEEILNLDSADKNELSAIIKMSGSLGLADKKLSLSIITENAKIARHIYALLERLYRINPEIKYHHKTNLRKNRVYTVFLDDNVEQILADLQLSDSFFGIETGIEQQILSDDNAGRSYLKGAFLSTGSIRDPESGKYQLEIFSVYLDHAEDLAKLMQKFMLDTKVIEHKHGAVTYLQKAEDIMDFLIIIGSMEGMEAFENIKVMRETRNDVNRTSNAETANIAKTINASIKTINNINKIKETVGLESLPIELQRIAQIRAAHPDFSIQQIADSLAVPLTKSGVNHRLRKINKIAEDL</sequence>
<accession>Q8DTM9</accession>
<comment type="function">
    <text evidence="1">Involved in cell division and chromosome segregation.</text>
</comment>
<comment type="similarity">
    <text evidence="1">Belongs to the WhiA family.</text>
</comment>
<feature type="chain" id="PRO_0000376575" description="Probable cell division protein WhiA">
    <location>
        <begin position="1"/>
        <end position="303"/>
    </location>
</feature>
<feature type="DNA-binding region" description="H-T-H motif" evidence="1">
    <location>
        <begin position="272"/>
        <end position="303"/>
    </location>
</feature>
<organism>
    <name type="scientific">Streptococcus mutans serotype c (strain ATCC 700610 / UA159)</name>
    <dbReference type="NCBI Taxonomy" id="210007"/>
    <lineage>
        <taxon>Bacteria</taxon>
        <taxon>Bacillati</taxon>
        <taxon>Bacillota</taxon>
        <taxon>Bacilli</taxon>
        <taxon>Lactobacillales</taxon>
        <taxon>Streptococcaceae</taxon>
        <taxon>Streptococcus</taxon>
    </lineage>
</organism>
<proteinExistence type="inferred from homology"/>
<protein>
    <recommendedName>
        <fullName evidence="1">Probable cell division protein WhiA</fullName>
    </recommendedName>
</protein>
<gene>
    <name evidence="1" type="primary">whiA</name>
    <name type="ordered locus">SMU_1304c</name>
</gene>
<dbReference type="EMBL" id="AE014133">
    <property type="protein sequence ID" value="AAN58981.1"/>
    <property type="molecule type" value="Genomic_DNA"/>
</dbReference>
<dbReference type="RefSeq" id="NP_721675.1">
    <property type="nucleotide sequence ID" value="NC_004350.2"/>
</dbReference>
<dbReference type="RefSeq" id="WP_002263723.1">
    <property type="nucleotide sequence ID" value="NC_004350.2"/>
</dbReference>
<dbReference type="SMR" id="Q8DTM9"/>
<dbReference type="STRING" id="210007.SMU_1304c"/>
<dbReference type="KEGG" id="smu:SMU_1304c"/>
<dbReference type="PATRIC" id="fig|210007.7.peg.1169"/>
<dbReference type="eggNOG" id="COG1481">
    <property type="taxonomic scope" value="Bacteria"/>
</dbReference>
<dbReference type="HOGENOM" id="CLU_053282_0_0_9"/>
<dbReference type="OrthoDB" id="401278at2"/>
<dbReference type="PhylomeDB" id="Q8DTM9"/>
<dbReference type="Proteomes" id="UP000002512">
    <property type="component" value="Chromosome"/>
</dbReference>
<dbReference type="GO" id="GO:0003677">
    <property type="term" value="F:DNA binding"/>
    <property type="evidence" value="ECO:0007669"/>
    <property type="project" value="UniProtKB-UniRule"/>
</dbReference>
<dbReference type="GO" id="GO:0051301">
    <property type="term" value="P:cell division"/>
    <property type="evidence" value="ECO:0007669"/>
    <property type="project" value="UniProtKB-UniRule"/>
</dbReference>
<dbReference type="GO" id="GO:0043937">
    <property type="term" value="P:regulation of sporulation"/>
    <property type="evidence" value="ECO:0007669"/>
    <property type="project" value="InterPro"/>
</dbReference>
<dbReference type="Gene3D" id="3.10.28.10">
    <property type="entry name" value="Homing endonucleases"/>
    <property type="match status" value="1"/>
</dbReference>
<dbReference type="HAMAP" id="MF_01420">
    <property type="entry name" value="HTH_type_WhiA"/>
    <property type="match status" value="1"/>
</dbReference>
<dbReference type="InterPro" id="IPR027434">
    <property type="entry name" value="Homing_endonucl"/>
</dbReference>
<dbReference type="InterPro" id="IPR018478">
    <property type="entry name" value="Sporu_reg_WhiA_N_dom"/>
</dbReference>
<dbReference type="InterPro" id="IPR003802">
    <property type="entry name" value="Sporulation_regulator_WhiA"/>
</dbReference>
<dbReference type="InterPro" id="IPR023054">
    <property type="entry name" value="Sporulation_regulator_WhiA_C"/>
</dbReference>
<dbReference type="InterPro" id="IPR039518">
    <property type="entry name" value="WhiA_LAGLIDADG_dom"/>
</dbReference>
<dbReference type="NCBIfam" id="TIGR00647">
    <property type="entry name" value="DNA_bind_WhiA"/>
    <property type="match status" value="1"/>
</dbReference>
<dbReference type="PANTHER" id="PTHR37307">
    <property type="entry name" value="CELL DIVISION PROTEIN WHIA-RELATED"/>
    <property type="match status" value="1"/>
</dbReference>
<dbReference type="PANTHER" id="PTHR37307:SF1">
    <property type="entry name" value="CELL DIVISION PROTEIN WHIA-RELATED"/>
    <property type="match status" value="1"/>
</dbReference>
<dbReference type="Pfam" id="PF02650">
    <property type="entry name" value="HTH_WhiA"/>
    <property type="match status" value="1"/>
</dbReference>
<dbReference type="Pfam" id="PF14527">
    <property type="entry name" value="LAGLIDADG_WhiA"/>
    <property type="match status" value="1"/>
</dbReference>
<dbReference type="Pfam" id="PF10298">
    <property type="entry name" value="WhiA_N"/>
    <property type="match status" value="1"/>
</dbReference>
<dbReference type="SUPFAM" id="SSF55608">
    <property type="entry name" value="Homing endonucleases"/>
    <property type="match status" value="1"/>
</dbReference>
<evidence type="ECO:0000255" key="1">
    <source>
        <dbReference type="HAMAP-Rule" id="MF_01420"/>
    </source>
</evidence>